<proteinExistence type="inferred from homology"/>
<protein>
    <recommendedName>
        <fullName>Probable pectin lyase F</fullName>
        <shortName>PLF</shortName>
        <ecNumber>4.2.2.10</ecNumber>
    </recommendedName>
</protein>
<evidence type="ECO:0000250" key="1"/>
<evidence type="ECO:0000255" key="2"/>
<evidence type="ECO:0000256" key="3">
    <source>
        <dbReference type="SAM" id="MobiDB-lite"/>
    </source>
</evidence>
<evidence type="ECO:0000305" key="4"/>
<feature type="signal peptide" evidence="2">
    <location>
        <begin position="1"/>
        <end position="20"/>
    </location>
</feature>
<feature type="chain" id="PRO_0000394362" description="Probable pectin lyase F">
    <location>
        <begin position="21"/>
        <end position="464"/>
    </location>
</feature>
<feature type="region of interest" description="Disordered" evidence="3">
    <location>
        <begin position="424"/>
        <end position="464"/>
    </location>
</feature>
<feature type="compositionally biased region" description="Low complexity" evidence="3">
    <location>
        <begin position="439"/>
        <end position="448"/>
    </location>
</feature>
<feature type="active site" evidence="2">
    <location>
        <position position="252"/>
    </location>
</feature>
<feature type="glycosylation site" description="N-linked (GlcNAc...) asparagine" evidence="2">
    <location>
        <position position="126"/>
    </location>
</feature>
<feature type="disulfide bond" evidence="1">
    <location>
        <begin position="80"/>
        <end position="103"/>
    </location>
</feature>
<feature type="disulfide bond" evidence="1">
    <location>
        <begin position="319"/>
        <end position="327"/>
    </location>
</feature>
<organism>
    <name type="scientific">Emericella nidulans (strain FGSC A4 / ATCC 38163 / CBS 112.46 / NRRL 194 / M139)</name>
    <name type="common">Aspergillus nidulans</name>
    <dbReference type="NCBI Taxonomy" id="227321"/>
    <lineage>
        <taxon>Eukaryota</taxon>
        <taxon>Fungi</taxon>
        <taxon>Dikarya</taxon>
        <taxon>Ascomycota</taxon>
        <taxon>Pezizomycotina</taxon>
        <taxon>Eurotiomycetes</taxon>
        <taxon>Eurotiomycetidae</taxon>
        <taxon>Eurotiales</taxon>
        <taxon>Aspergillaceae</taxon>
        <taxon>Aspergillus</taxon>
        <taxon>Aspergillus subgen. Nidulantes</taxon>
    </lineage>
</organism>
<accession>Q5B3J8</accession>
<accession>C8V9T8</accession>
<sequence length="464" mass="48152">MAIIRSVIAATALLGAAVNAQVVGTPFGFGAGTTGGGDATPAAPADTAELTEWLADDEPRVILIDKEFNFLGDECTDCECCIPDSNTCGDAGQNAIEVGIGWCGDYPTTTCTYDNAGLDGLDVGPNKSIVGVGDAGVIRGKGLRIHGTENVIVQNIHITELNPQYIWGGDAISLDGADKVWIDHVKISLVGRQMFVTGYESSGSVTFSNNELDGTTDWSASCDGHHYWTILALGENDKVTFANNYIHTTSGRAPKVGAPSFWHVYNNYWSDNTGHAFDVEESGTNVFIEGNVFEDINSAYNDDGTGAIFAVDSGSEATCSSVLGRTCVANSLTNSEYTAVADESVLSAFPADEEGDITILPVDQVAAYVLANAGVGKLSASGSTSGSSSSIAPSSSVPVIPTSTPLVYPTFTPPAVETNAIQKEHEVSTPAVPTPTPVPSSVGSHGSTAGSSHPPAFSRTSFES</sequence>
<dbReference type="EC" id="4.2.2.10"/>
<dbReference type="EMBL" id="AACD01000084">
    <property type="protein sequence ID" value="EAA60960.1"/>
    <property type="molecule type" value="Genomic_DNA"/>
</dbReference>
<dbReference type="EMBL" id="BN001303">
    <property type="protein sequence ID" value="CBF76561.1"/>
    <property type="molecule type" value="Genomic_DNA"/>
</dbReference>
<dbReference type="RefSeq" id="XP_662486.1">
    <property type="nucleotide sequence ID" value="XM_657394.1"/>
</dbReference>
<dbReference type="SMR" id="Q5B3J8"/>
<dbReference type="STRING" id="227321.Q5B3J8"/>
<dbReference type="CAZy" id="PL1">
    <property type="family name" value="Polysaccharide Lyase Family 1"/>
</dbReference>
<dbReference type="GlyCosmos" id="Q5B3J8">
    <property type="glycosylation" value="1 site, No reported glycans"/>
</dbReference>
<dbReference type="EnsemblFungi" id="CBF76561">
    <property type="protein sequence ID" value="CBF76561"/>
    <property type="gene ID" value="ANIA_04882"/>
</dbReference>
<dbReference type="KEGG" id="ani:ANIA_04882"/>
<dbReference type="VEuPathDB" id="FungiDB:AN4882"/>
<dbReference type="eggNOG" id="ENOG502QXM6">
    <property type="taxonomic scope" value="Eukaryota"/>
</dbReference>
<dbReference type="HOGENOM" id="CLU_021980_0_1_1"/>
<dbReference type="InParanoid" id="Q5B3J8"/>
<dbReference type="OMA" id="DWCGSYP"/>
<dbReference type="OrthoDB" id="1637350at2759"/>
<dbReference type="Proteomes" id="UP000000560">
    <property type="component" value="Chromosome III"/>
</dbReference>
<dbReference type="GO" id="GO:0005576">
    <property type="term" value="C:extracellular region"/>
    <property type="evidence" value="ECO:0007669"/>
    <property type="project" value="UniProtKB-SubCell"/>
</dbReference>
<dbReference type="GO" id="GO:0030570">
    <property type="term" value="F:pectate lyase activity"/>
    <property type="evidence" value="ECO:0007669"/>
    <property type="project" value="InterPro"/>
</dbReference>
<dbReference type="GO" id="GO:0047490">
    <property type="term" value="F:pectin lyase activity"/>
    <property type="evidence" value="ECO:0000250"/>
    <property type="project" value="UniProtKB"/>
</dbReference>
<dbReference type="GO" id="GO:0071555">
    <property type="term" value="P:cell wall organization"/>
    <property type="evidence" value="ECO:0007669"/>
    <property type="project" value="UniProtKB-KW"/>
</dbReference>
<dbReference type="GO" id="GO:0045490">
    <property type="term" value="P:pectin catabolic process"/>
    <property type="evidence" value="ECO:0000250"/>
    <property type="project" value="UniProtKB"/>
</dbReference>
<dbReference type="FunFam" id="2.160.20.10:FF:000003">
    <property type="entry name" value="Pectin lyase F"/>
    <property type="match status" value="1"/>
</dbReference>
<dbReference type="Gene3D" id="2.160.20.10">
    <property type="entry name" value="Single-stranded right-handed beta-helix, Pectin lyase-like"/>
    <property type="match status" value="1"/>
</dbReference>
<dbReference type="InterPro" id="IPR002022">
    <property type="entry name" value="Pec_lyase"/>
</dbReference>
<dbReference type="InterPro" id="IPR012334">
    <property type="entry name" value="Pectin_lyas_fold"/>
</dbReference>
<dbReference type="InterPro" id="IPR011050">
    <property type="entry name" value="Pectin_lyase_fold/virulence"/>
</dbReference>
<dbReference type="InterPro" id="IPR045032">
    <property type="entry name" value="PEL"/>
</dbReference>
<dbReference type="PANTHER" id="PTHR31683">
    <property type="entry name" value="PECTATE LYASE 18-RELATED"/>
    <property type="match status" value="1"/>
</dbReference>
<dbReference type="PANTHER" id="PTHR31683:SF67">
    <property type="entry name" value="PECTIN LYASE F-RELATED"/>
    <property type="match status" value="1"/>
</dbReference>
<dbReference type="Pfam" id="PF00544">
    <property type="entry name" value="Pectate_lyase_4"/>
    <property type="match status" value="1"/>
</dbReference>
<dbReference type="SMART" id="SM00656">
    <property type="entry name" value="Amb_all"/>
    <property type="match status" value="1"/>
</dbReference>
<dbReference type="SUPFAM" id="SSF51126">
    <property type="entry name" value="Pectin lyase-like"/>
    <property type="match status" value="1"/>
</dbReference>
<reference key="1">
    <citation type="journal article" date="2005" name="Nature">
        <title>Sequencing of Aspergillus nidulans and comparative analysis with A. fumigatus and A. oryzae.</title>
        <authorList>
            <person name="Galagan J.E."/>
            <person name="Calvo S.E."/>
            <person name="Cuomo C."/>
            <person name="Ma L.-J."/>
            <person name="Wortman J.R."/>
            <person name="Batzoglou S."/>
            <person name="Lee S.-I."/>
            <person name="Bastuerkmen M."/>
            <person name="Spevak C.C."/>
            <person name="Clutterbuck J."/>
            <person name="Kapitonov V."/>
            <person name="Jurka J."/>
            <person name="Scazzocchio C."/>
            <person name="Farman M.L."/>
            <person name="Butler J."/>
            <person name="Purcell S."/>
            <person name="Harris S."/>
            <person name="Braus G.H."/>
            <person name="Draht O."/>
            <person name="Busch S."/>
            <person name="D'Enfert C."/>
            <person name="Bouchier C."/>
            <person name="Goldman G.H."/>
            <person name="Bell-Pedersen D."/>
            <person name="Griffiths-Jones S."/>
            <person name="Doonan J.H."/>
            <person name="Yu J."/>
            <person name="Vienken K."/>
            <person name="Pain A."/>
            <person name="Freitag M."/>
            <person name="Selker E.U."/>
            <person name="Archer D.B."/>
            <person name="Penalva M.A."/>
            <person name="Oakley B.R."/>
            <person name="Momany M."/>
            <person name="Tanaka T."/>
            <person name="Kumagai T."/>
            <person name="Asai K."/>
            <person name="Machida M."/>
            <person name="Nierman W.C."/>
            <person name="Denning D.W."/>
            <person name="Caddick M.X."/>
            <person name="Hynes M."/>
            <person name="Paoletti M."/>
            <person name="Fischer R."/>
            <person name="Miller B.L."/>
            <person name="Dyer P.S."/>
            <person name="Sachs M.S."/>
            <person name="Osmani S.A."/>
            <person name="Birren B.W."/>
        </authorList>
    </citation>
    <scope>NUCLEOTIDE SEQUENCE [LARGE SCALE GENOMIC DNA]</scope>
    <source>
        <strain>FGSC A4 / ATCC 38163 / CBS 112.46 / NRRL 194 / M139</strain>
    </source>
</reference>
<reference key="2">
    <citation type="journal article" date="2009" name="Fungal Genet. Biol.">
        <title>The 2008 update of the Aspergillus nidulans genome annotation: a community effort.</title>
        <authorList>
            <person name="Wortman J.R."/>
            <person name="Gilsenan J.M."/>
            <person name="Joardar V."/>
            <person name="Deegan J."/>
            <person name="Clutterbuck J."/>
            <person name="Andersen M.R."/>
            <person name="Archer D."/>
            <person name="Bencina M."/>
            <person name="Braus G."/>
            <person name="Coutinho P."/>
            <person name="von Dohren H."/>
            <person name="Doonan J."/>
            <person name="Driessen A.J."/>
            <person name="Durek P."/>
            <person name="Espeso E."/>
            <person name="Fekete E."/>
            <person name="Flipphi M."/>
            <person name="Estrada C.G."/>
            <person name="Geysens S."/>
            <person name="Goldman G."/>
            <person name="de Groot P.W."/>
            <person name="Hansen K."/>
            <person name="Harris S.D."/>
            <person name="Heinekamp T."/>
            <person name="Helmstaedt K."/>
            <person name="Henrissat B."/>
            <person name="Hofmann G."/>
            <person name="Homan T."/>
            <person name="Horio T."/>
            <person name="Horiuchi H."/>
            <person name="James S."/>
            <person name="Jones M."/>
            <person name="Karaffa L."/>
            <person name="Karanyi Z."/>
            <person name="Kato M."/>
            <person name="Keller N."/>
            <person name="Kelly D.E."/>
            <person name="Kiel J.A."/>
            <person name="Kim J.M."/>
            <person name="van der Klei I.J."/>
            <person name="Klis F.M."/>
            <person name="Kovalchuk A."/>
            <person name="Krasevec N."/>
            <person name="Kubicek C.P."/>
            <person name="Liu B."/>
            <person name="Maccabe A."/>
            <person name="Meyer V."/>
            <person name="Mirabito P."/>
            <person name="Miskei M."/>
            <person name="Mos M."/>
            <person name="Mullins J."/>
            <person name="Nelson D.R."/>
            <person name="Nielsen J."/>
            <person name="Oakley B.R."/>
            <person name="Osmani S.A."/>
            <person name="Pakula T."/>
            <person name="Paszewski A."/>
            <person name="Paulsen I."/>
            <person name="Pilsyk S."/>
            <person name="Pocsi I."/>
            <person name="Punt P.J."/>
            <person name="Ram A.F."/>
            <person name="Ren Q."/>
            <person name="Robellet X."/>
            <person name="Robson G."/>
            <person name="Seiboth B."/>
            <person name="van Solingen P."/>
            <person name="Specht T."/>
            <person name="Sun J."/>
            <person name="Taheri-Talesh N."/>
            <person name="Takeshita N."/>
            <person name="Ussery D."/>
            <person name="vanKuyk P.A."/>
            <person name="Visser H."/>
            <person name="van de Vondervoort P.J."/>
            <person name="de Vries R.P."/>
            <person name="Walton J."/>
            <person name="Xiang X."/>
            <person name="Xiong Y."/>
            <person name="Zeng A.P."/>
            <person name="Brandt B.W."/>
            <person name="Cornell M.J."/>
            <person name="van den Hondel C.A."/>
            <person name="Visser J."/>
            <person name="Oliver S.G."/>
            <person name="Turner G."/>
        </authorList>
    </citation>
    <scope>GENOME REANNOTATION</scope>
    <source>
        <strain>FGSC A4 / ATCC 38163 / CBS 112.46 / NRRL 194 / M139</strain>
    </source>
</reference>
<name>PELF_EMENI</name>
<comment type="function">
    <text evidence="1">Pectinolytic enzymes consist of four classes of enzymes: pectin lyase, polygalacturonase, pectin methylesterase and rhamnogalacturonase. Among pectinolytic enzymes, pectin lyase is the most important in depolymerization of pectin, since it cleaves internal glycosidic bonds of highly methylated pectins (By similarity).</text>
</comment>
<comment type="catalytic activity">
    <reaction>
        <text>Eliminative cleavage of (1-&gt;4)-alpha-D-galacturonan methyl ester to give oligosaccharides with 4-deoxy-6-O-methyl-alpha-D-galact-4-enuronosyl groups at their non-reducing ends.</text>
        <dbReference type="EC" id="4.2.2.10"/>
    </reaction>
</comment>
<comment type="subcellular location">
    <subcellularLocation>
        <location evidence="1">Secreted</location>
    </subcellularLocation>
</comment>
<comment type="similarity">
    <text evidence="4">Belongs to the polysaccharide lyase 1 family.</text>
</comment>
<keyword id="KW-0119">Carbohydrate metabolism</keyword>
<keyword id="KW-0961">Cell wall biogenesis/degradation</keyword>
<keyword id="KW-1015">Disulfide bond</keyword>
<keyword id="KW-0325">Glycoprotein</keyword>
<keyword id="KW-0456">Lyase</keyword>
<keyword id="KW-0624">Polysaccharide degradation</keyword>
<keyword id="KW-1185">Reference proteome</keyword>
<keyword id="KW-0964">Secreted</keyword>
<keyword id="KW-0732">Signal</keyword>
<gene>
    <name type="primary">pelF</name>
    <name type="ORF">AN4882</name>
</gene>